<comment type="similarity">
    <text evidence="1">Belongs to the 5'(3')-deoxyribonucleotidase family.</text>
</comment>
<proteinExistence type="inferred from homology"/>
<reference key="1">
    <citation type="journal article" date="2003" name="Nature">
        <title>Genome sequence of Bacillus cereus and comparative analysis with Bacillus anthracis.</title>
        <authorList>
            <person name="Ivanova N."/>
            <person name="Sorokin A."/>
            <person name="Anderson I."/>
            <person name="Galleron N."/>
            <person name="Candelon B."/>
            <person name="Kapatral V."/>
            <person name="Bhattacharyya A."/>
            <person name="Reznik G."/>
            <person name="Mikhailova N."/>
            <person name="Lapidus A."/>
            <person name="Chu L."/>
            <person name="Mazur M."/>
            <person name="Goltsman E."/>
            <person name="Larsen N."/>
            <person name="D'Souza M."/>
            <person name="Walunas T."/>
            <person name="Grechkin Y."/>
            <person name="Pusch G."/>
            <person name="Haselkorn R."/>
            <person name="Fonstein M."/>
            <person name="Ehrlich S.D."/>
            <person name="Overbeek R."/>
            <person name="Kyrpides N.C."/>
        </authorList>
    </citation>
    <scope>NUCLEOTIDE SEQUENCE [LARGE SCALE GENOMIC DNA]</scope>
    <source>
        <strain>ATCC 14579 / DSM 31 / CCUG 7414 / JCM 2152 / NBRC 15305 / NCIMB 9373 / NCTC 2599 / NRRL B-3711</strain>
    </source>
</reference>
<feature type="chain" id="PRO_0000164389" description="Putative nucleotidase BC_3386">
    <location>
        <begin position="1"/>
        <end position="189"/>
    </location>
</feature>
<gene>
    <name type="ordered locus">BC_3386</name>
</gene>
<evidence type="ECO:0000305" key="1"/>
<accession>Q81B10</accession>
<sequence>MKFGFDIDDTLIDLRQHAFHLYNKKLNKKVGLDVFHSLKTIEIHEAFGMTSEEGSHMWNSLLDEIYYTSCSPFPYAVETLQELEKQGHEIYYITARPKEHGEQTKKWLIEKGFPVHEDRFFYGMKDEEKIHFIQEIKLNYFFDDKPAVLETLIGKPINVYAKTTSYNQHLNIPRITSWTELGDIIKKEM</sequence>
<organism>
    <name type="scientific">Bacillus cereus (strain ATCC 14579 / DSM 31 / CCUG 7414 / JCM 2152 / NBRC 15305 / NCIMB 9373 / NCTC 2599 / NRRL B-3711)</name>
    <dbReference type="NCBI Taxonomy" id="226900"/>
    <lineage>
        <taxon>Bacteria</taxon>
        <taxon>Bacillati</taxon>
        <taxon>Bacillota</taxon>
        <taxon>Bacilli</taxon>
        <taxon>Bacillales</taxon>
        <taxon>Bacillaceae</taxon>
        <taxon>Bacillus</taxon>
        <taxon>Bacillus cereus group</taxon>
    </lineage>
</organism>
<protein>
    <recommendedName>
        <fullName>Putative nucleotidase BC_3386</fullName>
        <ecNumber>3.1.3.-</ecNumber>
    </recommendedName>
</protein>
<keyword id="KW-0378">Hydrolase</keyword>
<keyword id="KW-1185">Reference proteome</keyword>
<dbReference type="EC" id="3.1.3.-"/>
<dbReference type="EMBL" id="AE016877">
    <property type="protein sequence ID" value="AAP10322.1"/>
    <property type="molecule type" value="Genomic_DNA"/>
</dbReference>
<dbReference type="RefSeq" id="NP_833121.1">
    <property type="nucleotide sequence ID" value="NC_004722.1"/>
</dbReference>
<dbReference type="RefSeq" id="WP_000668224.1">
    <property type="nucleotide sequence ID" value="NZ_CP138336.1"/>
</dbReference>
<dbReference type="SMR" id="Q81B10"/>
<dbReference type="STRING" id="226900.BC_3386"/>
<dbReference type="KEGG" id="bce:BC3386"/>
<dbReference type="PATRIC" id="fig|226900.8.peg.3471"/>
<dbReference type="HOGENOM" id="CLU_1451732_0_0_9"/>
<dbReference type="OrthoDB" id="573782at2"/>
<dbReference type="Proteomes" id="UP000001417">
    <property type="component" value="Chromosome"/>
</dbReference>
<dbReference type="GO" id="GO:0008253">
    <property type="term" value="F:5'-nucleotidase activity"/>
    <property type="evidence" value="ECO:0007669"/>
    <property type="project" value="InterPro"/>
</dbReference>
<dbReference type="GO" id="GO:0009264">
    <property type="term" value="P:deoxyribonucleotide catabolic process"/>
    <property type="evidence" value="ECO:0007669"/>
    <property type="project" value="InterPro"/>
</dbReference>
<dbReference type="Gene3D" id="3.40.50.1000">
    <property type="entry name" value="HAD superfamily/HAD-like"/>
    <property type="match status" value="1"/>
</dbReference>
<dbReference type="InterPro" id="IPR010708">
    <property type="entry name" value="5'(3')-deoxyribonucleotidase"/>
</dbReference>
<dbReference type="InterPro" id="IPR052419">
    <property type="entry name" value="5_3-deoxyribonucleotidase-like"/>
</dbReference>
<dbReference type="InterPro" id="IPR036412">
    <property type="entry name" value="HAD-like_sf"/>
</dbReference>
<dbReference type="InterPro" id="IPR023214">
    <property type="entry name" value="HAD_sf"/>
</dbReference>
<dbReference type="InterPro" id="IPR009206">
    <property type="entry name" value="Nucleotidase_putative"/>
</dbReference>
<dbReference type="PANTHER" id="PTHR35134">
    <property type="entry name" value="NUCLEOTIDASE YQFW-RELATED"/>
    <property type="match status" value="1"/>
</dbReference>
<dbReference type="PANTHER" id="PTHR35134:SF2">
    <property type="entry name" value="NUCLEOTIDASE YQFW-RELATED"/>
    <property type="match status" value="1"/>
</dbReference>
<dbReference type="Pfam" id="PF06941">
    <property type="entry name" value="NT5C"/>
    <property type="match status" value="1"/>
</dbReference>
<dbReference type="PIRSF" id="PIRSF021362">
    <property type="entry name" value="UCP021362_HAD"/>
    <property type="match status" value="1"/>
</dbReference>
<dbReference type="SUPFAM" id="SSF56784">
    <property type="entry name" value="HAD-like"/>
    <property type="match status" value="1"/>
</dbReference>
<name>Y3386_BACCR</name>